<feature type="chain" id="PRO_0000095893" description="Translation initiation factor IF-1">
    <location>
        <begin position="1"/>
        <end position="72"/>
    </location>
</feature>
<feature type="domain" description="S1-like" evidence="1">
    <location>
        <begin position="1"/>
        <end position="72"/>
    </location>
</feature>
<feature type="strand" evidence="3">
    <location>
        <begin position="11"/>
        <end position="13"/>
    </location>
</feature>
<feature type="turn" evidence="3">
    <location>
        <begin position="19"/>
        <end position="21"/>
    </location>
</feature>
<feature type="strand" evidence="3">
    <location>
        <begin position="26"/>
        <end position="30"/>
    </location>
</feature>
<feature type="helix" evidence="3">
    <location>
        <begin position="39"/>
        <end position="43"/>
    </location>
</feature>
<feature type="strand" evidence="3">
    <location>
        <begin position="53"/>
        <end position="57"/>
    </location>
</feature>
<reference key="1">
    <citation type="submission" date="2004-11" db="EMBL/GenBank/DDBJ databases">
        <title>Complete genome sequence of Thermus thermophilus HB8.</title>
        <authorList>
            <person name="Masui R."/>
            <person name="Kurokawa K."/>
            <person name="Nakagawa N."/>
            <person name="Tokunaga F."/>
            <person name="Koyama Y."/>
            <person name="Shibata T."/>
            <person name="Oshima T."/>
            <person name="Yokoyama S."/>
            <person name="Yasunaga T."/>
            <person name="Kuramitsu S."/>
        </authorList>
    </citation>
    <scope>NUCLEOTIDE SEQUENCE [LARGE SCALE GENOMIC DNA]</scope>
    <source>
        <strain>ATCC 27634 / DSM 579 / HB8</strain>
    </source>
</reference>
<reference key="2">
    <citation type="journal article" date="2012" name="Crit. Rev. Biochem. Mol. Biol.">
        <title>Kinetic control of translation initiation in bacteria.</title>
        <authorList>
            <person name="Milon P."/>
            <person name="Rodnina M.V."/>
        </authorList>
    </citation>
    <scope>REVIEW</scope>
</reference>
<reference key="3">
    <citation type="journal article" date="2001" name="Science">
        <title>Crystal structure of an initiation factor bound to the 30S ribosomal subunit.</title>
        <authorList>
            <person name="Carter A.P."/>
            <person name="Clemons W.M. Jr."/>
            <person name="Brodersen D.E."/>
            <person name="Morgan-Warren R.J."/>
            <person name="Hartsch T."/>
            <person name="Wimberly B.T."/>
            <person name="Ramakrishnan V."/>
        </authorList>
    </citation>
    <scope>X-RAY CRYSTALLOGRAPHY (3.20 ANGSTROMS) OF 2-72</scope>
    <scope>FUNCTION</scope>
    <scope>INTERACTION WITH S12</scope>
    <scope>SUBUNIT</scope>
    <scope>RIBOSOME-BINDING</scope>
    <scope>RRNA-BINDING</scope>
</reference>
<dbReference type="EMBL" id="AP008226">
    <property type="protein sequence ID" value="BAD71492.1"/>
    <property type="molecule type" value="Genomic_DNA"/>
</dbReference>
<dbReference type="RefSeq" id="WP_008633373.1">
    <property type="nucleotide sequence ID" value="NC_006461.1"/>
</dbReference>
<dbReference type="RefSeq" id="YP_144935.1">
    <property type="nucleotide sequence ID" value="NC_006461.1"/>
</dbReference>
<dbReference type="PDB" id="1HR0">
    <property type="method" value="X-ray"/>
    <property type="resolution" value="3.20 A"/>
    <property type="chains" value="W=2-72"/>
</dbReference>
<dbReference type="PDB" id="5LMN">
    <property type="method" value="EM"/>
    <property type="resolution" value="3.55 A"/>
    <property type="chains" value="W=1-72"/>
</dbReference>
<dbReference type="PDB" id="5LMO">
    <property type="method" value="EM"/>
    <property type="resolution" value="4.30 A"/>
    <property type="chains" value="W=1-72"/>
</dbReference>
<dbReference type="PDB" id="5LMP">
    <property type="method" value="EM"/>
    <property type="resolution" value="5.35 A"/>
    <property type="chains" value="W=1-72"/>
</dbReference>
<dbReference type="PDB" id="5LMQ">
    <property type="method" value="EM"/>
    <property type="resolution" value="4.20 A"/>
    <property type="chains" value="W=1-72"/>
</dbReference>
<dbReference type="PDB" id="5LMR">
    <property type="method" value="EM"/>
    <property type="resolution" value="4.45 A"/>
    <property type="chains" value="W=1-72"/>
</dbReference>
<dbReference type="PDB" id="5LMS">
    <property type="method" value="EM"/>
    <property type="resolution" value="5.10 A"/>
    <property type="chains" value="W=1-72"/>
</dbReference>
<dbReference type="PDB" id="5LMT">
    <property type="method" value="EM"/>
    <property type="resolution" value="4.15 A"/>
    <property type="chains" value="W=1-72"/>
</dbReference>
<dbReference type="PDB" id="5LMV">
    <property type="method" value="EM"/>
    <property type="resolution" value="4.90 A"/>
    <property type="chains" value="W=1-72"/>
</dbReference>
<dbReference type="PDB" id="5ME0">
    <property type="method" value="EM"/>
    <property type="resolution" value="13.50 A"/>
    <property type="chains" value="V=1-72"/>
</dbReference>
<dbReference type="PDB" id="5ME1">
    <property type="method" value="EM"/>
    <property type="resolution" value="13.50 A"/>
    <property type="chains" value="V=1-72"/>
</dbReference>
<dbReference type="PDB" id="6O7K">
    <property type="method" value="EM"/>
    <property type="resolution" value="4.20 A"/>
    <property type="chains" value="5=2-72"/>
</dbReference>
<dbReference type="PDBsum" id="1HR0"/>
<dbReference type="PDBsum" id="5LMN"/>
<dbReference type="PDBsum" id="5LMO"/>
<dbReference type="PDBsum" id="5LMP"/>
<dbReference type="PDBsum" id="5LMQ"/>
<dbReference type="PDBsum" id="5LMR"/>
<dbReference type="PDBsum" id="5LMS"/>
<dbReference type="PDBsum" id="5LMT"/>
<dbReference type="PDBsum" id="5LMV"/>
<dbReference type="PDBsum" id="5ME0"/>
<dbReference type="PDBsum" id="5ME1"/>
<dbReference type="PDBsum" id="6O7K"/>
<dbReference type="EMDB" id="EMD-0643"/>
<dbReference type="EMDB" id="EMD-2448"/>
<dbReference type="EMDB" id="EMD-3494"/>
<dbReference type="EMDB" id="EMD-3495"/>
<dbReference type="EMDB" id="EMD-4073"/>
<dbReference type="EMDB" id="EMD-4074"/>
<dbReference type="EMDB" id="EMD-4075"/>
<dbReference type="EMDB" id="EMD-4076"/>
<dbReference type="EMDB" id="EMD-4077"/>
<dbReference type="EMDB" id="EMD-4078"/>
<dbReference type="EMDB" id="EMD-4079"/>
<dbReference type="EMDB" id="EMD-4083"/>
<dbReference type="SMR" id="Q5SHR1"/>
<dbReference type="IntAct" id="Q5SHR1">
    <property type="interactions" value="23"/>
</dbReference>
<dbReference type="EnsemblBacteria" id="BAD71492">
    <property type="protein sequence ID" value="BAD71492"/>
    <property type="gene ID" value="BAD71492"/>
</dbReference>
<dbReference type="GeneID" id="3168806"/>
<dbReference type="KEGG" id="ttj:TTHA1669"/>
<dbReference type="PATRIC" id="fig|300852.9.peg.1639"/>
<dbReference type="eggNOG" id="COG0361">
    <property type="taxonomic scope" value="Bacteria"/>
</dbReference>
<dbReference type="HOGENOM" id="CLU_151267_1_0_0"/>
<dbReference type="PhylomeDB" id="Q5SHR1"/>
<dbReference type="EvolutionaryTrace" id="Q5SHR1"/>
<dbReference type="Proteomes" id="UP000000532">
    <property type="component" value="Chromosome"/>
</dbReference>
<dbReference type="GO" id="GO:0005829">
    <property type="term" value="C:cytosol"/>
    <property type="evidence" value="ECO:0007669"/>
    <property type="project" value="TreeGrafter"/>
</dbReference>
<dbReference type="GO" id="GO:0043022">
    <property type="term" value="F:ribosome binding"/>
    <property type="evidence" value="ECO:0007669"/>
    <property type="project" value="UniProtKB-UniRule"/>
</dbReference>
<dbReference type="GO" id="GO:0019843">
    <property type="term" value="F:rRNA binding"/>
    <property type="evidence" value="ECO:0007669"/>
    <property type="project" value="UniProtKB-UniRule"/>
</dbReference>
<dbReference type="GO" id="GO:0003743">
    <property type="term" value="F:translation initiation factor activity"/>
    <property type="evidence" value="ECO:0007669"/>
    <property type="project" value="UniProtKB-UniRule"/>
</dbReference>
<dbReference type="CDD" id="cd04451">
    <property type="entry name" value="S1_IF1"/>
    <property type="match status" value="1"/>
</dbReference>
<dbReference type="FunFam" id="2.40.50.140:FF:000002">
    <property type="entry name" value="Translation initiation factor IF-1"/>
    <property type="match status" value="1"/>
</dbReference>
<dbReference type="Gene3D" id="2.40.50.140">
    <property type="entry name" value="Nucleic acid-binding proteins"/>
    <property type="match status" value="1"/>
</dbReference>
<dbReference type="HAMAP" id="MF_00075">
    <property type="entry name" value="IF_1"/>
    <property type="match status" value="1"/>
</dbReference>
<dbReference type="InterPro" id="IPR012340">
    <property type="entry name" value="NA-bd_OB-fold"/>
</dbReference>
<dbReference type="InterPro" id="IPR006196">
    <property type="entry name" value="RNA-binding_domain_S1_IF1"/>
</dbReference>
<dbReference type="InterPro" id="IPR004368">
    <property type="entry name" value="TIF_IF1"/>
</dbReference>
<dbReference type="NCBIfam" id="TIGR00008">
    <property type="entry name" value="infA"/>
    <property type="match status" value="1"/>
</dbReference>
<dbReference type="PANTHER" id="PTHR33370">
    <property type="entry name" value="TRANSLATION INITIATION FACTOR IF-1, CHLOROPLASTIC"/>
    <property type="match status" value="1"/>
</dbReference>
<dbReference type="PANTHER" id="PTHR33370:SF1">
    <property type="entry name" value="TRANSLATION INITIATION FACTOR IF-1, CHLOROPLASTIC"/>
    <property type="match status" value="1"/>
</dbReference>
<dbReference type="Pfam" id="PF01176">
    <property type="entry name" value="eIF-1a"/>
    <property type="match status" value="1"/>
</dbReference>
<dbReference type="SUPFAM" id="SSF50249">
    <property type="entry name" value="Nucleic acid-binding proteins"/>
    <property type="match status" value="1"/>
</dbReference>
<dbReference type="PROSITE" id="PS50832">
    <property type="entry name" value="S1_IF1_TYPE"/>
    <property type="match status" value="1"/>
</dbReference>
<sequence length="72" mass="8234">MAKEKDTIRTEGVVTEALPNATFRVKLDSGPEILAYISGKMRMHYIRILPGDRVVVEITPYDPTRGRIVYRK</sequence>
<comment type="function">
    <text evidence="1 2">One of the essential components for the initiation of protein synthesis. Binds in the vicinity of the A-site (PubMed:11228145). Stabilizes the binding of IF-2 and IF-3 on the 30S subunit to which N-formylmethionyl-tRNA(fMet) subsequently binds. Helps modulate mRNA selection, yielding the 30S pre-initiation complex (PIC). Upon addition of the 50S ribosomal subunit IF-1, IF-2 and IF-3 are released leaving the mature 70S translation initiation complex.</text>
</comment>
<comment type="subunit">
    <text evidence="1 2">Binds to the 30S ribosomal subunit, contacting protein S12 and the 16S rRNA (PubMed:11228145). Component of the 30S ribosomal translation pre-initiation complex which assembles on the 30S ribosome in the order IF-2 and IF-3, IF-1 and N-formylmethionyl-tRNA(fMet); mRNA recruitment can occur at any time during PIC assembly.</text>
</comment>
<comment type="subcellular location">
    <subcellularLocation>
        <location evidence="1">Cytoplasm</location>
    </subcellularLocation>
</comment>
<comment type="similarity">
    <text evidence="1">Belongs to the IF-1 family.</text>
</comment>
<proteinExistence type="evidence at protein level"/>
<keyword id="KW-0002">3D-structure</keyword>
<keyword id="KW-0963">Cytoplasm</keyword>
<keyword id="KW-0396">Initiation factor</keyword>
<keyword id="KW-0648">Protein biosynthesis</keyword>
<keyword id="KW-1185">Reference proteome</keyword>
<keyword id="KW-0694">RNA-binding</keyword>
<keyword id="KW-0699">rRNA-binding</keyword>
<name>IF1_THET8</name>
<evidence type="ECO:0000255" key="1">
    <source>
        <dbReference type="HAMAP-Rule" id="MF_00075"/>
    </source>
</evidence>
<evidence type="ECO:0000269" key="2">
    <source>
    </source>
</evidence>
<evidence type="ECO:0007829" key="3">
    <source>
        <dbReference type="PDB" id="1HR0"/>
    </source>
</evidence>
<gene>
    <name evidence="1" type="primary">infA</name>
    <name type="ordered locus">TTHA1669</name>
</gene>
<protein>
    <recommendedName>
        <fullName evidence="1">Translation initiation factor IF-1</fullName>
    </recommendedName>
</protein>
<organism>
    <name type="scientific">Thermus thermophilus (strain ATCC 27634 / DSM 579 / HB8)</name>
    <dbReference type="NCBI Taxonomy" id="300852"/>
    <lineage>
        <taxon>Bacteria</taxon>
        <taxon>Thermotogati</taxon>
        <taxon>Deinococcota</taxon>
        <taxon>Deinococci</taxon>
        <taxon>Thermales</taxon>
        <taxon>Thermaceae</taxon>
        <taxon>Thermus</taxon>
    </lineage>
</organism>
<accession>Q5SHR1</accession>